<accession>U5T8F2</accession>
<dbReference type="EMBL" id="KF314689">
    <property type="protein sequence ID" value="AGY96986.1"/>
    <property type="molecule type" value="mRNA"/>
</dbReference>
<dbReference type="PDB" id="4LMS">
    <property type="method" value="X-ray"/>
    <property type="resolution" value="1.35 A"/>
    <property type="chains" value="B/D=1-177"/>
</dbReference>
<dbReference type="PDBsum" id="4LMS"/>
<dbReference type="SMR" id="U5T8F2"/>
<dbReference type="EvolutionaryTrace" id="U5T8F2"/>
<dbReference type="GO" id="GO:0009535">
    <property type="term" value="C:chloroplast thylakoid membrane"/>
    <property type="evidence" value="ECO:0007669"/>
    <property type="project" value="UniProtKB-SubCell"/>
</dbReference>
<dbReference type="GO" id="GO:0030089">
    <property type="term" value="C:phycobilisome"/>
    <property type="evidence" value="ECO:0007669"/>
    <property type="project" value="InterPro"/>
</dbReference>
<dbReference type="GO" id="GO:0015979">
    <property type="term" value="P:photosynthesis"/>
    <property type="evidence" value="ECO:0007669"/>
    <property type="project" value="UniProtKB-KW"/>
</dbReference>
<dbReference type="Gene3D" id="1.10.490.20">
    <property type="entry name" value="Phycocyanins"/>
    <property type="match status" value="1"/>
</dbReference>
<dbReference type="InterPro" id="IPR009050">
    <property type="entry name" value="Globin-like_sf"/>
</dbReference>
<dbReference type="InterPro" id="IPR012128">
    <property type="entry name" value="Phycobilisome_asu/bsu"/>
</dbReference>
<dbReference type="InterPro" id="IPR038719">
    <property type="entry name" value="Phycobilisome_asu/bsu_sf"/>
</dbReference>
<dbReference type="PANTHER" id="PTHR34011:SF7">
    <property type="entry name" value="C-PHYCOCYANIN BETA SUBUNIT"/>
    <property type="match status" value="1"/>
</dbReference>
<dbReference type="PANTHER" id="PTHR34011">
    <property type="entry name" value="PHYCOBILISOME 32.1 KDA LINKER POLYPEPTIDE, PHYCOCYANIN-ASSOCIATED, ROD 2-RELATED"/>
    <property type="match status" value="1"/>
</dbReference>
<dbReference type="Pfam" id="PF00502">
    <property type="entry name" value="Phycobilisome"/>
    <property type="match status" value="1"/>
</dbReference>
<dbReference type="PIRSF" id="PIRSF000081">
    <property type="entry name" value="Phycocyanin"/>
    <property type="match status" value="1"/>
</dbReference>
<dbReference type="SUPFAM" id="SSF46458">
    <property type="entry name" value="Globin-like"/>
    <property type="match status" value="1"/>
</dbReference>
<protein>
    <recommendedName>
        <fullName evidence="2">Phycocyanin PC645 beta subunit</fullName>
    </recommendedName>
</protein>
<keyword id="KW-0002">3D-structure</keyword>
<keyword id="KW-0089">Bile pigment</keyword>
<keyword id="KW-0150">Chloroplast</keyword>
<keyword id="KW-0157">Chromophore</keyword>
<keyword id="KW-0249">Electron transport</keyword>
<keyword id="KW-0472">Membrane</keyword>
<keyword id="KW-0602">Photosynthesis</keyword>
<keyword id="KW-0934">Plastid</keyword>
<keyword id="KW-0793">Thylakoid</keyword>
<keyword id="KW-0813">Transport</keyword>
<geneLocation type="chloroplast" evidence="3"/>
<reference evidence="3 4" key="1">
    <citation type="journal article" date="2014" name="Proc. Natl. Acad. Sci. U.S.A.">
        <title>Single-residue insertion switches the quaternary structure and exciton states of cryptophyte light-harvesting proteins.</title>
        <authorList>
            <person name="Harrop S.J."/>
            <person name="Wilk K.E."/>
            <person name="Dinshaw R."/>
            <person name="Collini E."/>
            <person name="Mirkovic T."/>
            <person name="Teng C.Y."/>
            <person name="Oblinsky D.G."/>
            <person name="Green B.R."/>
            <person name="Hoef-Emden K."/>
            <person name="Hiller R.G."/>
            <person name="Scholes G.D."/>
            <person name="Curmi P.M."/>
        </authorList>
    </citation>
    <scope>NUCLEOTIDE SEQUENCE [MRNA]</scope>
    <scope>X-RAY CRYSTALLOGRAPHY (1.35 ANGSTROMS) IN COMPLEX WITH 15,16-DIHYDROBILIVERDIN; MESOBILIVERDIN AND PHYCOCYANOBILIN</scope>
    <scope>SUBUNIT</scope>
</reference>
<sequence length="177" mass="18337">MLDAFSRVVTSADSKAAYVGGADLQALKKFVSEGNKRLDAVNAIVSNASCIVSDAVSGMICENPALISPSGNCYTNRRMAACLRDAEIILRYVSYSLLSGDSSVLEDRCLGGLKETYASLGVPAAGNARAVGIMKATCVGFINNTSNQKKLSTPAGDCSALASECAGYFDKVTSALA</sequence>
<evidence type="ECO:0000269" key="1">
    <source>
    </source>
</evidence>
<evidence type="ECO:0000305" key="2"/>
<evidence type="ECO:0000312" key="3">
    <source>
        <dbReference type="EMBL" id="AGY96986.1"/>
    </source>
</evidence>
<evidence type="ECO:0007744" key="4">
    <source>
        <dbReference type="PDB" id="4LMS"/>
    </source>
</evidence>
<evidence type="ECO:0007829" key="5">
    <source>
        <dbReference type="PDB" id="4LMS"/>
    </source>
</evidence>
<proteinExistence type="evidence at protein level"/>
<comment type="function">
    <text evidence="2">Light-harvesting photosynthetic tetrapyrrole chromophore-protein from the phycobiliprotein complex.</text>
</comment>
<comment type="subunit">
    <text evidence="1">Heterotetramer of 2 different alpha chains and 2 identical beta chains which form 2 alpha-beta heterodimers within the heterotetramer.</text>
</comment>
<comment type="subcellular location">
    <subcellularLocation>
        <location evidence="2">Plastid</location>
        <location evidence="2">Chloroplast thylakoid membrane</location>
        <topology evidence="2">Peripheral membrane protein</topology>
        <orientation evidence="2">Lumenal side</orientation>
    </subcellularLocation>
</comment>
<comment type="PTM">
    <text evidence="1">Contains two phycocyanobilin chromophores, one mesobiliverdin chromophore and one 15,16-dihydrobiliverdin chromophore with binding mediated by both the alpha and beta subunits.</text>
</comment>
<comment type="miscellaneous">
    <text evidence="2">The light-harvesting system in Cryptophytes contains phycobiliprotein complexes. Unusually they are composed of either phycoerythrin (CPE) or phycocyanin (CPC) but never allophycocyanin (APC), with only one type of biliprotein being present in any one species. Unlike cyanobacteria or red algae these proteins are not arranged into higher-order phycobilisome complexes, and they are found in the thylakoid lumen.</text>
</comment>
<comment type="similarity">
    <text evidence="2">Belongs to the phycobiliprotein family.</text>
</comment>
<name>PHEB_CHRS2</name>
<feature type="chain" id="PRO_0000455437" description="Phycocyanin PC645 beta subunit">
    <location>
        <begin position="1"/>
        <end position="177"/>
    </location>
</feature>
<feature type="binding site" evidence="1 4">
    <location>
        <position position="18"/>
    </location>
    <ligand>
        <name>mesobiliverdin</name>
        <dbReference type="ChEBI" id="CHEBI:189061"/>
        <note>ligand shared with alpha subunit</note>
    </ligand>
</feature>
<feature type="binding site" evidence="1 4">
    <location>
        <position position="28"/>
    </location>
    <ligand>
        <name>(2R,3E)-phycocyanobilin</name>
        <dbReference type="ChEBI" id="CHEBI:85275"/>
        <label>1</label>
        <note>ligand shared with alpha subunit</note>
    </ligand>
</feature>
<feature type="binding site" evidence="1 4">
    <location>
        <position position="35"/>
    </location>
    <ligand>
        <name>(2R,3E)-phycocyanobilin</name>
        <dbReference type="ChEBI" id="CHEBI:85275"/>
        <label>1</label>
        <note>ligand shared with alpha subunit</note>
    </ligand>
</feature>
<feature type="binding site" evidence="1 4">
    <location>
        <position position="39"/>
    </location>
    <ligand>
        <name>(2R,3E)-phycocyanobilin</name>
        <dbReference type="ChEBI" id="CHEBI:85275"/>
        <label>1</label>
        <note>ligand shared with alpha subunit</note>
    </ligand>
</feature>
<feature type="binding site" description="covalent" evidence="1 4">
    <location>
        <position position="50"/>
    </location>
    <ligand>
        <name>15,16-dihydrobiliverdin</name>
        <dbReference type="ChEBI" id="CHEBI:57899"/>
        <note>ligand shared with alpha subunit</note>
    </ligand>
</feature>
<feature type="binding site" evidence="1 4">
    <location>
        <position position="54"/>
    </location>
    <ligand>
        <name>15,16-dihydrobiliverdin</name>
        <dbReference type="ChEBI" id="CHEBI:57899"/>
        <note>ligand shared with alpha subunit</note>
    </ligand>
</feature>
<feature type="binding site" description="covalent" evidence="1 4">
    <location>
        <position position="61"/>
    </location>
    <ligand>
        <name>15,16-dihydrobiliverdin</name>
        <dbReference type="ChEBI" id="CHEBI:57899"/>
        <note>ligand shared with alpha subunit</note>
    </ligand>
</feature>
<feature type="binding site" evidence="1 4">
    <location>
        <position position="72"/>
    </location>
    <ligand>
        <name>(2R,3E)-phycocyanobilin</name>
        <dbReference type="ChEBI" id="CHEBI:85275"/>
        <label>2</label>
        <note>ligand shared with alpha subunit</note>
    </ligand>
</feature>
<feature type="binding site" evidence="1 4">
    <location>
        <position position="77"/>
    </location>
    <ligand>
        <name>(2R,3E)-phycocyanobilin</name>
        <dbReference type="ChEBI" id="CHEBI:85275"/>
        <label>2</label>
        <note>ligand shared with alpha subunit</note>
    </ligand>
</feature>
<feature type="binding site" description="covalent" evidence="1 4">
    <location>
        <position position="82"/>
    </location>
    <ligand>
        <name>(2R,3E)-phycocyanobilin</name>
        <dbReference type="ChEBI" id="CHEBI:85275"/>
        <label>2</label>
        <note>ligand shared with alpha subunit</note>
    </ligand>
</feature>
<feature type="binding site" evidence="1 4">
    <location>
        <position position="84"/>
    </location>
    <ligand>
        <name>(2R,3E)-phycocyanobilin</name>
        <dbReference type="ChEBI" id="CHEBI:85275"/>
        <label>2</label>
        <note>ligand shared with alpha subunit</note>
    </ligand>
</feature>
<feature type="binding site" evidence="1 4">
    <location>
        <position position="85"/>
    </location>
    <ligand>
        <name>(2R,3E)-phycocyanobilin</name>
        <dbReference type="ChEBI" id="CHEBI:85275"/>
        <label>2</label>
        <note>ligand shared with alpha subunit</note>
    </ligand>
</feature>
<feature type="binding site" evidence="1 4">
    <location>
        <position position="148"/>
    </location>
    <ligand>
        <name>15,16-dihydrobiliverdin</name>
        <dbReference type="ChEBI" id="CHEBI:57899"/>
        <note>ligand shared with alpha subunit</note>
    </ligand>
</feature>
<feature type="binding site" evidence="1 4">
    <location>
        <position position="154"/>
    </location>
    <ligand>
        <name>(2R,3E)-phycocyanobilin</name>
        <dbReference type="ChEBI" id="CHEBI:85275"/>
        <label>1</label>
        <note>ligand shared with alpha subunit</note>
    </ligand>
</feature>
<feature type="binding site" evidence="1 4">
    <location>
        <position position="156"/>
    </location>
    <ligand>
        <name>(2R,3E)-phycocyanobilin</name>
        <dbReference type="ChEBI" id="CHEBI:85275"/>
        <label>1</label>
        <note>ligand shared with alpha subunit</note>
    </ligand>
</feature>
<feature type="binding site" description="covalent" evidence="1 4">
    <location>
        <position position="158"/>
    </location>
    <ligand>
        <name>(2R,3E)-phycocyanobilin</name>
        <dbReference type="ChEBI" id="CHEBI:85275"/>
        <label>1</label>
        <note>ligand shared with alpha subunit</note>
    </ligand>
</feature>
<feature type="strand" evidence="5">
    <location>
        <begin position="17"/>
        <end position="20"/>
    </location>
</feature>
<feature type="helix" evidence="5">
    <location>
        <begin position="21"/>
        <end position="30"/>
    </location>
</feature>
<feature type="helix" evidence="5">
    <location>
        <begin position="34"/>
        <end position="45"/>
    </location>
</feature>
<feature type="helix" evidence="5">
    <location>
        <begin position="48"/>
        <end position="62"/>
    </location>
</feature>
<feature type="helix" evidence="5">
    <location>
        <begin position="64"/>
        <end position="67"/>
    </location>
</feature>
<feature type="helix" evidence="5">
    <location>
        <begin position="76"/>
        <end position="99"/>
    </location>
</feature>
<feature type="helix" evidence="5">
    <location>
        <begin position="103"/>
        <end position="107"/>
    </location>
</feature>
<feature type="turn" evidence="5">
    <location>
        <begin position="108"/>
        <end position="112"/>
    </location>
</feature>
<feature type="helix" evidence="5">
    <location>
        <begin position="113"/>
        <end position="120"/>
    </location>
</feature>
<feature type="helix" evidence="5">
    <location>
        <begin position="124"/>
        <end position="142"/>
    </location>
</feature>
<feature type="helix" evidence="5">
    <location>
        <begin position="159"/>
        <end position="175"/>
    </location>
</feature>
<organism>
    <name type="scientific">Chroomonas sp. (strain CCMP270)</name>
    <dbReference type="NCBI Taxonomy" id="354589"/>
    <lineage>
        <taxon>Eukaryota</taxon>
        <taxon>Cryptophyceae</taxon>
        <taxon>Pyrenomonadales</taxon>
        <taxon>Chroomonadaceae</taxon>
        <taxon>Chroomonas</taxon>
    </lineage>
</organism>